<organism>
    <name type="scientific">Manduca sexta</name>
    <name type="common">Tobacco hawkmoth</name>
    <name type="synonym">Tobacco hornworm</name>
    <dbReference type="NCBI Taxonomy" id="7130"/>
    <lineage>
        <taxon>Eukaryota</taxon>
        <taxon>Metazoa</taxon>
        <taxon>Ecdysozoa</taxon>
        <taxon>Arthropoda</taxon>
        <taxon>Hexapoda</taxon>
        <taxon>Insecta</taxon>
        <taxon>Pterygota</taxon>
        <taxon>Neoptera</taxon>
        <taxon>Endopterygota</taxon>
        <taxon>Lepidoptera</taxon>
        <taxon>Glossata</taxon>
        <taxon>Ditrysia</taxon>
        <taxon>Bombycoidea</taxon>
        <taxon>Sphingidae</taxon>
        <taxon>Sphinginae</taxon>
        <taxon>Sphingini</taxon>
        <taxon>Manduca</taxon>
    </lineage>
</organism>
<proteinExistence type="evidence at transcript level"/>
<keyword id="KW-0217">Developmental protein</keyword>
<keyword id="KW-1015">Disulfide bond</keyword>
<keyword id="KW-0272">Extracellular matrix</keyword>
<keyword id="KW-0325">Glycoprotein</keyword>
<keyword id="KW-0449">Lipoprotein</keyword>
<keyword id="KW-0964">Secreted</keyword>
<keyword id="KW-0709">Segmentation polarity protein</keyword>
<keyword id="KW-0879">Wnt signaling pathway</keyword>
<comment type="function">
    <text evidence="1">Segment polarity protein. Binds to the frizzled seven-transmembrane receptors. This protein is probably a growth factor (By similarity).</text>
</comment>
<comment type="subcellular location">
    <subcellularLocation>
        <location>Secreted</location>
        <location>Extracellular space</location>
        <location>Extracellular matrix</location>
    </subcellularLocation>
</comment>
<comment type="developmental stage">
    <text>Transcription is first detected just prior to gastrulation.</text>
</comment>
<comment type="PTM">
    <text evidence="2">Palmitoleoylated by porcupine. The lipid group functions as a sorting signal, targeting the ligand to polarized vesicles that transport wg to unique sites at the cell surface. Depalmitoleoylated by notum, leading to inhibit Wnt signaling pathway.</text>
</comment>
<comment type="similarity">
    <text evidence="6">Belongs to the Wnt family.</text>
</comment>
<evidence type="ECO:0000250" key="1"/>
<evidence type="ECO:0000250" key="2">
    <source>
        <dbReference type="UniProtKB" id="P09615"/>
    </source>
</evidence>
<evidence type="ECO:0000250" key="3">
    <source>
        <dbReference type="UniProtKB" id="P56704"/>
    </source>
</evidence>
<evidence type="ECO:0000255" key="4"/>
<evidence type="ECO:0000256" key="5">
    <source>
        <dbReference type="SAM" id="MobiDB-lite"/>
    </source>
</evidence>
<evidence type="ECO:0000305" key="6"/>
<name>WNTG_MANSE</name>
<dbReference type="EMBL" id="Z30280">
    <property type="protein sequence ID" value="CAA82954.1"/>
    <property type="molecule type" value="Genomic_DNA"/>
</dbReference>
<dbReference type="SMR" id="Q25533"/>
<dbReference type="GlyCosmos" id="Q25533">
    <property type="glycosylation" value="2 sites, No reported glycans"/>
</dbReference>
<dbReference type="EnsemblMetazoa" id="XM_037446381.1">
    <property type="protein sequence ID" value="XP_037302278.1"/>
    <property type="gene ID" value="LOC119192566"/>
</dbReference>
<dbReference type="OrthoDB" id="5945655at2759"/>
<dbReference type="GO" id="GO:0005615">
    <property type="term" value="C:extracellular space"/>
    <property type="evidence" value="ECO:0007669"/>
    <property type="project" value="TreeGrafter"/>
</dbReference>
<dbReference type="GO" id="GO:0005125">
    <property type="term" value="F:cytokine activity"/>
    <property type="evidence" value="ECO:0007669"/>
    <property type="project" value="TreeGrafter"/>
</dbReference>
<dbReference type="GO" id="GO:0005109">
    <property type="term" value="F:frizzled binding"/>
    <property type="evidence" value="ECO:0007669"/>
    <property type="project" value="TreeGrafter"/>
</dbReference>
<dbReference type="GO" id="GO:0060070">
    <property type="term" value="P:canonical Wnt signaling pathway"/>
    <property type="evidence" value="ECO:0007669"/>
    <property type="project" value="TreeGrafter"/>
</dbReference>
<dbReference type="GO" id="GO:0045165">
    <property type="term" value="P:cell fate commitment"/>
    <property type="evidence" value="ECO:0007669"/>
    <property type="project" value="TreeGrafter"/>
</dbReference>
<dbReference type="GO" id="GO:0030182">
    <property type="term" value="P:neuron differentiation"/>
    <property type="evidence" value="ECO:0007669"/>
    <property type="project" value="TreeGrafter"/>
</dbReference>
<dbReference type="GO" id="GO:0007367">
    <property type="term" value="P:segment polarity determination"/>
    <property type="evidence" value="ECO:0007669"/>
    <property type="project" value="UniProtKB-KW"/>
</dbReference>
<dbReference type="Gene3D" id="3.30.2460.20">
    <property type="match status" value="1"/>
</dbReference>
<dbReference type="InterPro" id="IPR005817">
    <property type="entry name" value="Wnt"/>
</dbReference>
<dbReference type="InterPro" id="IPR043158">
    <property type="entry name" value="Wnt_C"/>
</dbReference>
<dbReference type="PANTHER" id="PTHR12027:SF91">
    <property type="entry name" value="PROTO-ONCOGENE WNT-1"/>
    <property type="match status" value="1"/>
</dbReference>
<dbReference type="PANTHER" id="PTHR12027">
    <property type="entry name" value="WNT RELATED"/>
    <property type="match status" value="1"/>
</dbReference>
<dbReference type="Pfam" id="PF00110">
    <property type="entry name" value="wnt"/>
    <property type="match status" value="1"/>
</dbReference>
<dbReference type="SMART" id="SM00097">
    <property type="entry name" value="WNT1"/>
    <property type="match status" value="1"/>
</dbReference>
<protein>
    <recommendedName>
        <fullName>Protein wingless</fullName>
    </recommendedName>
</protein>
<reference key="1">
    <citation type="journal article" date="1994" name="Proc. Natl. Acad. Sci. U.S.A.">
        <title>Drosophila mode of metamerization in the embryogenesis of the lepidopteran insect Manduca sexta.</title>
        <authorList>
            <person name="Kraft R."/>
            <person name="Jaeckle H."/>
        </authorList>
    </citation>
    <scope>NUCLEOTIDE SEQUENCE [GENOMIC DNA]</scope>
    <source>
        <tissue>Embryo</tissue>
    </source>
</reference>
<feature type="chain" id="PRO_0000200667" description="Protein wingless">
    <location>
        <begin position="1" status="less than"/>
        <end position="141" status="greater than"/>
    </location>
</feature>
<feature type="region of interest" description="Disordered" evidence="5">
    <location>
        <begin position="40"/>
        <end position="61"/>
    </location>
</feature>
<feature type="compositionally biased region" description="Polar residues" evidence="5">
    <location>
        <begin position="40"/>
        <end position="49"/>
    </location>
</feature>
<feature type="lipid moiety-binding region" description="O-palmitoleoyl serine; by PORCN" evidence="3">
    <location>
        <position position="3"/>
    </location>
</feature>
<feature type="glycosylation site" description="N-linked (GlcNAc...) asparagine" evidence="4">
    <location>
        <position position="108"/>
    </location>
</feature>
<feature type="glycosylation site" description="N-linked (GlcNAc...) asparagine" evidence="4">
    <location>
        <position position="138"/>
    </location>
</feature>
<feature type="disulfide bond" evidence="1">
    <location>
        <begin position="107"/>
        <end position="122"/>
    </location>
</feature>
<feature type="non-terminal residue">
    <location>
        <position position="1"/>
    </location>
</feature>
<feature type="non-terminal residue">
    <location>
        <position position="141"/>
    </location>
</feature>
<gene>
    <name type="primary">WG</name>
</gene>
<sequence>GMSGSCTVKTCWMRLPSFRSVGDALKDRFDGASRVMVSNTDLEAPTQRNDAAPHRAPRRERYKLKLQPHNPDHKSPGSKDLVYLEPSPGFCEKNPRLGIPGTHGRACNDTSIGVDGCDLMCCGRGYRTETMFVVERCNCTF</sequence>
<accession>Q25533</accession>